<keyword id="KW-0535">Nitrogen fixation</keyword>
<keyword id="KW-0804">Transcription</keyword>
<keyword id="KW-0805">Transcription regulation</keyword>
<reference key="1">
    <citation type="journal article" date="1997" name="J. Bacteriol.">
        <title>Nitrogenase phylogeny and the molybdenum dependence of nitrogen fixation in Methanococcus maripaludis.</title>
        <authorList>
            <person name="Kessler P.S."/>
            <person name="McLarnan J."/>
            <person name="Leigh J.A."/>
        </authorList>
    </citation>
    <scope>NUCLEOTIDE SEQUENCE [GENOMIC DNA]</scope>
    <source>
        <strain>ATCC 43000 / DSM 2067 / JCM 10722 / JJ</strain>
    </source>
</reference>
<feature type="chain" id="PRO_0000139807" description="Nitrogen fixation nifHD region glnB-like protein 2">
    <location>
        <begin position="1"/>
        <end position="121"/>
    </location>
</feature>
<dbReference type="EMBL" id="U75887">
    <property type="protein sequence ID" value="AAC45514.1"/>
    <property type="molecule type" value="Genomic_DNA"/>
</dbReference>
<dbReference type="PIR" id="T10092">
    <property type="entry name" value="T10092"/>
</dbReference>
<dbReference type="RefSeq" id="WP_011170799.1">
    <property type="nucleotide sequence ID" value="NZ_JAGINF010000001.1"/>
</dbReference>
<dbReference type="SMR" id="P0CW46"/>
<dbReference type="DIP" id="DIP-61200N"/>
<dbReference type="IntAct" id="P0CW46">
    <property type="interactions" value="3"/>
</dbReference>
<dbReference type="OMA" id="AVIRMNM"/>
<dbReference type="GO" id="GO:0005829">
    <property type="term" value="C:cytosol"/>
    <property type="evidence" value="ECO:0007669"/>
    <property type="project" value="TreeGrafter"/>
</dbReference>
<dbReference type="GO" id="GO:0005524">
    <property type="term" value="F:ATP binding"/>
    <property type="evidence" value="ECO:0007669"/>
    <property type="project" value="TreeGrafter"/>
</dbReference>
<dbReference type="GO" id="GO:0030234">
    <property type="term" value="F:enzyme regulator activity"/>
    <property type="evidence" value="ECO:0007669"/>
    <property type="project" value="InterPro"/>
</dbReference>
<dbReference type="GO" id="GO:0009399">
    <property type="term" value="P:nitrogen fixation"/>
    <property type="evidence" value="ECO:0007669"/>
    <property type="project" value="UniProtKB-KW"/>
</dbReference>
<dbReference type="GO" id="GO:0006808">
    <property type="term" value="P:regulation of nitrogen utilization"/>
    <property type="evidence" value="ECO:0007669"/>
    <property type="project" value="InterPro"/>
</dbReference>
<dbReference type="Gene3D" id="3.30.70.120">
    <property type="match status" value="1"/>
</dbReference>
<dbReference type="InterPro" id="IPR002187">
    <property type="entry name" value="N-reg_PII"/>
</dbReference>
<dbReference type="InterPro" id="IPR011322">
    <property type="entry name" value="N-reg_PII-like_a/b"/>
</dbReference>
<dbReference type="InterPro" id="IPR015867">
    <property type="entry name" value="N-reg_PII/ATP_PRibTrfase_C"/>
</dbReference>
<dbReference type="InterPro" id="IPR017918">
    <property type="entry name" value="N-reg_PII_CS"/>
</dbReference>
<dbReference type="PANTHER" id="PTHR30115">
    <property type="entry name" value="NITROGEN REGULATORY PROTEIN P-II"/>
    <property type="match status" value="1"/>
</dbReference>
<dbReference type="PANTHER" id="PTHR30115:SF11">
    <property type="entry name" value="NITROGEN REGULATORY PROTEIN P-II HOMOLOG"/>
    <property type="match status" value="1"/>
</dbReference>
<dbReference type="Pfam" id="PF00543">
    <property type="entry name" value="P-II"/>
    <property type="match status" value="1"/>
</dbReference>
<dbReference type="PRINTS" id="PR00340">
    <property type="entry name" value="PIIGLNB"/>
</dbReference>
<dbReference type="SMART" id="SM00938">
    <property type="entry name" value="P-II"/>
    <property type="match status" value="1"/>
</dbReference>
<dbReference type="SUPFAM" id="SSF54913">
    <property type="entry name" value="GlnB-like"/>
    <property type="match status" value="1"/>
</dbReference>
<dbReference type="PROSITE" id="PS00638">
    <property type="entry name" value="PII_GLNB_CTER"/>
    <property type="match status" value="1"/>
</dbReference>
<dbReference type="PROSITE" id="PS51343">
    <property type="entry name" value="PII_GLNB_DOM"/>
    <property type="match status" value="1"/>
</dbReference>
<sequence length="121" mass="13233">MKEIIAIIRPSKMAQTKTVLEGLGFPAMTANRVLGRGKQKAIVGELGFEVDNKELLNQPGDMRYIPKTMLTLIVPDEDASLVVEAIMKVNKSGQYGDGKIFVCPIEDIITVRTSERGEAAI</sequence>
<organism>
    <name type="scientific">Methanococcus maripaludis</name>
    <name type="common">Methanococcus deltae</name>
    <dbReference type="NCBI Taxonomy" id="39152"/>
    <lineage>
        <taxon>Archaea</taxon>
        <taxon>Methanobacteriati</taxon>
        <taxon>Methanobacteriota</taxon>
        <taxon>Methanomada group</taxon>
        <taxon>Methanococci</taxon>
        <taxon>Methanococcales</taxon>
        <taxon>Methanococcaceae</taxon>
        <taxon>Methanococcus</taxon>
    </lineage>
</organism>
<protein>
    <recommendedName>
        <fullName>Nitrogen fixation nifHD region glnB-like protein 2</fullName>
    </recommendedName>
</protein>
<gene>
    <name type="primary">glnBII</name>
    <name type="synonym">nifI2</name>
</gene>
<name>GLNB2_METMI</name>
<accession>P0CW46</accession>
<accession>P71525</accession>
<comment type="function">
    <text>Could be involved in the regulation of nitrogen fixation.</text>
</comment>
<comment type="interaction">
    <interactant intactId="EBI-15587572">
        <id>P0CW46</id>
    </interactant>
    <interactant intactId="EBI-15587555">
        <id>P0CW44</id>
        <label>glnBI</label>
    </interactant>
    <organismsDiffer>false</organismsDiffer>
    <experiments>4</experiments>
</comment>
<comment type="similarity">
    <text evidence="1">Belongs to the P(II) protein family.</text>
</comment>
<evidence type="ECO:0000255" key="1">
    <source>
        <dbReference type="PROSITE-ProRule" id="PRU00675"/>
    </source>
</evidence>
<proteinExistence type="evidence at protein level"/>